<feature type="chain" id="PRO_0000186726" description="Calcium homeostasis modulator protein 5">
    <location>
        <begin position="1"/>
        <end position="309"/>
    </location>
</feature>
<feature type="topological domain" description="Cytoplasmic" evidence="3">
    <location>
        <begin position="1"/>
        <end position="15"/>
    </location>
</feature>
<feature type="transmembrane region" description="Helical; Name=S1" evidence="2 5">
    <location>
        <begin position="16"/>
        <end position="37"/>
    </location>
</feature>
<feature type="topological domain" description="Extracellular" evidence="3">
    <location>
        <begin position="38"/>
        <end position="45"/>
    </location>
</feature>
<feature type="transmembrane region" description="Helical; Name=S2" evidence="2 5">
    <location>
        <begin position="46"/>
        <end position="70"/>
    </location>
</feature>
<feature type="topological domain" description="Cytoplasmic" evidence="3">
    <location>
        <begin position="71"/>
        <end position="99"/>
    </location>
</feature>
<feature type="transmembrane region" description="Helical; Name=S3" evidence="2 5">
    <location>
        <begin position="100"/>
        <end position="129"/>
    </location>
</feature>
<feature type="topological domain" description="Extracellular" evidence="3">
    <location>
        <begin position="130"/>
        <end position="174"/>
    </location>
</feature>
<feature type="transmembrane region" description="Helical; Name=S4" evidence="2 5">
    <location>
        <begin position="175"/>
        <end position="200"/>
    </location>
</feature>
<feature type="topological domain" description="Cytoplasmic" evidence="3">
    <location>
        <begin position="201"/>
        <end position="309"/>
    </location>
</feature>
<feature type="binding site" evidence="2 5">
    <location>
        <position position="15"/>
    </location>
    <ligand>
        <name>a 1,2-diacyl-sn-glycero-3-phosphate</name>
        <dbReference type="ChEBI" id="CHEBI:58608"/>
    </ligand>
</feature>
<feature type="binding site" evidence="2">
    <location>
        <position position="32"/>
    </location>
    <ligand>
        <name>a 1,2-diacyl-sn-glycero-3-phosphate</name>
        <dbReference type="ChEBI" id="CHEBI:58608"/>
    </ligand>
</feature>
<feature type="binding site" evidence="2">
    <location>
        <position position="37"/>
    </location>
    <ligand>
        <name>a 1,2-diacyl-sn-glycero-3-phosphate</name>
        <dbReference type="ChEBI" id="CHEBI:58608"/>
    </ligand>
</feature>
<feature type="binding site" evidence="2 5">
    <location>
        <position position="102"/>
    </location>
    <ligand>
        <name>a 1,2-diacyl-sn-glycero-3-phosphate</name>
        <dbReference type="ChEBI" id="CHEBI:58608"/>
    </ligand>
</feature>
<feature type="binding site" evidence="2 6">
    <location>
        <position position="121"/>
    </location>
    <ligand>
        <name>a 1,2-diacyl-sn-glycero-3-phosphate</name>
        <dbReference type="ChEBI" id="CHEBI:58608"/>
    </ligand>
</feature>
<feature type="binding site" evidence="2 5">
    <location>
        <position position="202"/>
    </location>
    <ligand>
        <name>a 1,2-diacyl-sn-glycero-3-phosphate</name>
        <dbReference type="ChEBI" id="CHEBI:58608"/>
    </ligand>
</feature>
<feature type="disulfide bond" evidence="2 5">
    <location>
        <begin position="41"/>
        <end position="127"/>
    </location>
</feature>
<feature type="disulfide bond" evidence="2 5">
    <location>
        <begin position="43"/>
        <end position="158"/>
    </location>
</feature>
<feature type="disulfide bond" evidence="2 5">
    <location>
        <begin position="142"/>
        <end position="149"/>
    </location>
</feature>
<feature type="sequence conflict" description="In Ref. 1; BAG52825." evidence="3" ref="1">
    <original>H</original>
    <variation>P</variation>
    <location>
        <position position="307"/>
    </location>
</feature>
<feature type="helix" evidence="7">
    <location>
        <begin position="3"/>
        <end position="7"/>
    </location>
</feature>
<feature type="helix" evidence="7">
    <location>
        <begin position="10"/>
        <end position="13"/>
    </location>
</feature>
<feature type="helix" evidence="7">
    <location>
        <begin position="15"/>
        <end position="37"/>
    </location>
</feature>
<feature type="strand" evidence="8">
    <location>
        <begin position="43"/>
        <end position="45"/>
    </location>
</feature>
<feature type="helix" evidence="7">
    <location>
        <begin position="47"/>
        <end position="68"/>
    </location>
</feature>
<feature type="helix" evidence="7">
    <location>
        <begin position="71"/>
        <end position="77"/>
    </location>
</feature>
<feature type="helix" evidence="7">
    <location>
        <begin position="80"/>
        <end position="82"/>
    </location>
</feature>
<feature type="helix" evidence="7">
    <location>
        <begin position="84"/>
        <end position="86"/>
    </location>
</feature>
<feature type="helix" evidence="7">
    <location>
        <begin position="95"/>
        <end position="106"/>
    </location>
</feature>
<feature type="helix" evidence="7">
    <location>
        <begin position="109"/>
        <end position="120"/>
    </location>
</feature>
<feature type="helix" evidence="7">
    <location>
        <begin position="123"/>
        <end position="130"/>
    </location>
</feature>
<feature type="helix" evidence="7">
    <location>
        <begin position="138"/>
        <end position="141"/>
    </location>
</feature>
<feature type="strand" evidence="7">
    <location>
        <begin position="142"/>
        <end position="145"/>
    </location>
</feature>
<feature type="helix" evidence="7">
    <location>
        <begin position="147"/>
        <end position="149"/>
    </location>
</feature>
<feature type="strand" evidence="9">
    <location>
        <begin position="150"/>
        <end position="152"/>
    </location>
</feature>
<feature type="helix" evidence="7">
    <location>
        <begin position="153"/>
        <end position="155"/>
    </location>
</feature>
<feature type="turn" evidence="7">
    <location>
        <begin position="156"/>
        <end position="158"/>
    </location>
</feature>
<feature type="turn" evidence="7">
    <location>
        <begin position="165"/>
        <end position="167"/>
    </location>
</feature>
<feature type="helix" evidence="7">
    <location>
        <begin position="168"/>
        <end position="203"/>
    </location>
</feature>
<feature type="helix" evidence="7">
    <location>
        <begin position="209"/>
        <end position="246"/>
    </location>
</feature>
<feature type="helix" evidence="7">
    <location>
        <begin position="259"/>
        <end position="264"/>
    </location>
</feature>
<feature type="strand" evidence="7">
    <location>
        <begin position="273"/>
        <end position="275"/>
    </location>
</feature>
<feature type="helix" evidence="7">
    <location>
        <begin position="280"/>
        <end position="287"/>
    </location>
</feature>
<accession>Q8N5C1</accession>
<accession>B2RDJ9</accession>
<accession>B3KSR3</accession>
<organism>
    <name type="scientific">Homo sapiens</name>
    <name type="common">Human</name>
    <dbReference type="NCBI Taxonomy" id="9606"/>
    <lineage>
        <taxon>Eukaryota</taxon>
        <taxon>Metazoa</taxon>
        <taxon>Chordata</taxon>
        <taxon>Craniata</taxon>
        <taxon>Vertebrata</taxon>
        <taxon>Euteleostomi</taxon>
        <taxon>Mammalia</taxon>
        <taxon>Eutheria</taxon>
        <taxon>Euarchontoglires</taxon>
        <taxon>Primates</taxon>
        <taxon>Haplorrhini</taxon>
        <taxon>Catarrhini</taxon>
        <taxon>Hominidae</taxon>
        <taxon>Homo</taxon>
    </lineage>
</organism>
<dbReference type="EMBL" id="AK094140">
    <property type="protein sequence ID" value="BAG52825.1"/>
    <property type="molecule type" value="mRNA"/>
</dbReference>
<dbReference type="EMBL" id="AK315572">
    <property type="protein sequence ID" value="BAG37946.1"/>
    <property type="molecule type" value="mRNA"/>
</dbReference>
<dbReference type="EMBL" id="AL121953">
    <property type="status" value="NOT_ANNOTATED_CDS"/>
    <property type="molecule type" value="Genomic_DNA"/>
</dbReference>
<dbReference type="EMBL" id="CH471051">
    <property type="protein sequence ID" value="EAW48226.1"/>
    <property type="molecule type" value="Genomic_DNA"/>
</dbReference>
<dbReference type="CCDS" id="CCDS5108.1"/>
<dbReference type="RefSeq" id="NP_714922.1">
    <property type="nucleotide sequence ID" value="NM_153711.5"/>
</dbReference>
<dbReference type="PDB" id="7D60">
    <property type="method" value="EM"/>
    <property type="resolution" value="2.61 A"/>
    <property type="chains" value="A/B/C/D/E/F/G/H/I/J/K=1-288"/>
</dbReference>
<dbReference type="PDB" id="7D61">
    <property type="method" value="EM"/>
    <property type="resolution" value="2.80 A"/>
    <property type="chains" value="A/B/C/D/E/F/G/H/I/J/K=1-288"/>
</dbReference>
<dbReference type="PDB" id="7D65">
    <property type="method" value="EM"/>
    <property type="resolution" value="2.94 A"/>
    <property type="chains" value="A/B/C/D/E/F/G/H/I/J/K=1-288"/>
</dbReference>
<dbReference type="PDBsum" id="7D60"/>
<dbReference type="PDBsum" id="7D61"/>
<dbReference type="PDBsum" id="7D65"/>
<dbReference type="EMDB" id="EMD-30586"/>
<dbReference type="EMDB" id="EMD-30587"/>
<dbReference type="EMDB" id="EMD-30589"/>
<dbReference type="SMR" id="Q8N5C1"/>
<dbReference type="BioGRID" id="129023">
    <property type="interactions" value="6"/>
</dbReference>
<dbReference type="FunCoup" id="Q8N5C1">
    <property type="interactions" value="13"/>
</dbReference>
<dbReference type="IntAct" id="Q8N5C1">
    <property type="interactions" value="4"/>
</dbReference>
<dbReference type="MINT" id="Q8N5C1"/>
<dbReference type="STRING" id="9606.ENSP00000357588"/>
<dbReference type="TCDB" id="1.A.84.1.7">
    <property type="family name" value="the calcium homeostasis modulator ca(2+) channel (calhm-c) family"/>
</dbReference>
<dbReference type="iPTMnet" id="Q8N5C1"/>
<dbReference type="PhosphoSitePlus" id="Q8N5C1"/>
<dbReference type="SwissPalm" id="Q8N5C1"/>
<dbReference type="BioMuta" id="CALHM5"/>
<dbReference type="DMDM" id="68565211"/>
<dbReference type="jPOST" id="Q8N5C1"/>
<dbReference type="MassIVE" id="Q8N5C1"/>
<dbReference type="PaxDb" id="9606-ENSP00000357588"/>
<dbReference type="PeptideAtlas" id="Q8N5C1"/>
<dbReference type="ProteomicsDB" id="72029"/>
<dbReference type="Pumba" id="Q8N5C1"/>
<dbReference type="Antibodypedia" id="51121">
    <property type="antibodies" value="70 antibodies from 12 providers"/>
</dbReference>
<dbReference type="DNASU" id="254228"/>
<dbReference type="Ensembl" id="ENST00000368599.4">
    <property type="protein sequence ID" value="ENSP00000357588.3"/>
    <property type="gene ID" value="ENSG00000178033.6"/>
</dbReference>
<dbReference type="GeneID" id="254228"/>
<dbReference type="KEGG" id="hsa:254228"/>
<dbReference type="MANE-Select" id="ENST00000368599.4">
    <property type="protein sequence ID" value="ENSP00000357588.3"/>
    <property type="RefSeq nucleotide sequence ID" value="NM_153711.5"/>
    <property type="RefSeq protein sequence ID" value="NP_714922.1"/>
</dbReference>
<dbReference type="UCSC" id="uc003pwy.4">
    <property type="organism name" value="human"/>
</dbReference>
<dbReference type="AGR" id="HGNC:21568"/>
<dbReference type="CTD" id="254228"/>
<dbReference type="GeneCards" id="CALHM5"/>
<dbReference type="HGNC" id="HGNC:21568">
    <property type="gene designation" value="CALHM5"/>
</dbReference>
<dbReference type="HPA" id="ENSG00000178033">
    <property type="expression patterns" value="Low tissue specificity"/>
</dbReference>
<dbReference type="neXtProt" id="NX_Q8N5C1"/>
<dbReference type="OpenTargets" id="ENSG00000178033"/>
<dbReference type="PharmGKB" id="PA162387635"/>
<dbReference type="VEuPathDB" id="HostDB:ENSG00000178033"/>
<dbReference type="eggNOG" id="ENOG502QPKW">
    <property type="taxonomic scope" value="Eukaryota"/>
</dbReference>
<dbReference type="GeneTree" id="ENSGT01030000234610"/>
<dbReference type="HOGENOM" id="CLU_069286_2_0_1"/>
<dbReference type="InParanoid" id="Q8N5C1"/>
<dbReference type="OMA" id="HYSTIHR"/>
<dbReference type="OrthoDB" id="5953668at2759"/>
<dbReference type="PAN-GO" id="Q8N5C1">
    <property type="GO annotations" value="2 GO annotations based on evolutionary models"/>
</dbReference>
<dbReference type="PhylomeDB" id="Q8N5C1"/>
<dbReference type="TreeFam" id="TF329085"/>
<dbReference type="PathwayCommons" id="Q8N5C1"/>
<dbReference type="SignaLink" id="Q8N5C1"/>
<dbReference type="BioGRID-ORCS" id="254228">
    <property type="hits" value="8 hits in 1144 CRISPR screens"/>
</dbReference>
<dbReference type="GenomeRNAi" id="254228"/>
<dbReference type="Pharos" id="Q8N5C1">
    <property type="development level" value="Tdark"/>
</dbReference>
<dbReference type="PRO" id="PR:Q8N5C1"/>
<dbReference type="Proteomes" id="UP000005640">
    <property type="component" value="Chromosome 6"/>
</dbReference>
<dbReference type="RNAct" id="Q8N5C1">
    <property type="molecule type" value="protein"/>
</dbReference>
<dbReference type="Bgee" id="ENSG00000178033">
    <property type="expression patterns" value="Expressed in tendon of biceps brachii and 122 other cell types or tissues"/>
</dbReference>
<dbReference type="GO" id="GO:0005886">
    <property type="term" value="C:plasma membrane"/>
    <property type="evidence" value="ECO:0000318"/>
    <property type="project" value="GO_Central"/>
</dbReference>
<dbReference type="GO" id="GO:0005261">
    <property type="term" value="F:monoatomic cation channel activity"/>
    <property type="evidence" value="ECO:0000318"/>
    <property type="project" value="GO_Central"/>
</dbReference>
<dbReference type="GO" id="GO:1904669">
    <property type="term" value="P:ATP export"/>
    <property type="evidence" value="ECO:0007669"/>
    <property type="project" value="UniProtKB-ARBA"/>
</dbReference>
<dbReference type="InterPro" id="IPR029569">
    <property type="entry name" value="CALHM"/>
</dbReference>
<dbReference type="PANTHER" id="PTHR32261">
    <property type="entry name" value="CALCIUM HOMEOSTASIS MODULATOR PROTEIN"/>
    <property type="match status" value="1"/>
</dbReference>
<dbReference type="PANTHER" id="PTHR32261:SF8">
    <property type="entry name" value="CALCIUM HOMEOSTASIS MODULATOR PROTEIN 5"/>
    <property type="match status" value="1"/>
</dbReference>
<dbReference type="Pfam" id="PF14798">
    <property type="entry name" value="Ca_hom_mod"/>
    <property type="match status" value="1"/>
</dbReference>
<keyword id="KW-0002">3D-structure</keyword>
<keyword id="KW-1015">Disulfide bond</keyword>
<keyword id="KW-0407">Ion channel</keyword>
<keyword id="KW-0406">Ion transport</keyword>
<keyword id="KW-0472">Membrane</keyword>
<keyword id="KW-1267">Proteomics identification</keyword>
<keyword id="KW-1185">Reference proteome</keyword>
<keyword id="KW-0812">Transmembrane</keyword>
<keyword id="KW-1133">Transmembrane helix</keyword>
<keyword id="KW-0813">Transport</keyword>
<evidence type="ECO:0000255" key="1"/>
<evidence type="ECO:0000269" key="2">
    <source>
    </source>
</evidence>
<evidence type="ECO:0000305" key="3"/>
<evidence type="ECO:0000312" key="4">
    <source>
        <dbReference type="HGNC" id="HGNC:21568"/>
    </source>
</evidence>
<evidence type="ECO:0007744" key="5">
    <source>
        <dbReference type="PDB" id="7D60"/>
    </source>
</evidence>
<evidence type="ECO:0007744" key="6">
    <source>
        <dbReference type="PDB" id="7D61"/>
    </source>
</evidence>
<evidence type="ECO:0007829" key="7">
    <source>
        <dbReference type="PDB" id="7D60"/>
    </source>
</evidence>
<evidence type="ECO:0007829" key="8">
    <source>
        <dbReference type="PDB" id="7D61"/>
    </source>
</evidence>
<evidence type="ECO:0007829" key="9">
    <source>
        <dbReference type="PDB" id="7D65"/>
    </source>
</evidence>
<sequence length="309" mass="35170">MDAFQGILKFFLNQKTVIGYSFMALLTVGSERLFSVVAFKCPCSTENMTYGLVFLFAPAWVLLILGFFLNNRSWRLFTGCCVNPRKIFPRGHSCRFFYVLGQITLSSLVAPVMWLSVALLNGTFYECAMSGTRSSGLLELICKGKPKECWEELHKVSCGKTSMLPTVNEELKLSLQAQSQILGWCLICSASFFSLLTTCYARCRSKVSYLQLSFWKTYAQKEKEQLENTFLDYANKLSERNLKCFFENKRPDPFPMPTFAAWEAASELHSFHQSQQHYSTLHRVVDNGLQLSPEDDETTMVLVGTAHNM</sequence>
<protein>
    <recommendedName>
        <fullName>Calcium homeostasis modulator protein 5</fullName>
    </recommendedName>
    <alternativeName>
        <fullName>Protein FAM26E</fullName>
    </alternativeName>
</protein>
<proteinExistence type="evidence at protein level"/>
<reference key="1">
    <citation type="journal article" date="2004" name="Nat. Genet.">
        <title>Complete sequencing and characterization of 21,243 full-length human cDNAs.</title>
        <authorList>
            <person name="Ota T."/>
            <person name="Suzuki Y."/>
            <person name="Nishikawa T."/>
            <person name="Otsuki T."/>
            <person name="Sugiyama T."/>
            <person name="Irie R."/>
            <person name="Wakamatsu A."/>
            <person name="Hayashi K."/>
            <person name="Sato H."/>
            <person name="Nagai K."/>
            <person name="Kimura K."/>
            <person name="Makita H."/>
            <person name="Sekine M."/>
            <person name="Obayashi M."/>
            <person name="Nishi T."/>
            <person name="Shibahara T."/>
            <person name="Tanaka T."/>
            <person name="Ishii S."/>
            <person name="Yamamoto J."/>
            <person name="Saito K."/>
            <person name="Kawai Y."/>
            <person name="Isono Y."/>
            <person name="Nakamura Y."/>
            <person name="Nagahari K."/>
            <person name="Murakami K."/>
            <person name="Yasuda T."/>
            <person name="Iwayanagi T."/>
            <person name="Wagatsuma M."/>
            <person name="Shiratori A."/>
            <person name="Sudo H."/>
            <person name="Hosoiri T."/>
            <person name="Kaku Y."/>
            <person name="Kodaira H."/>
            <person name="Kondo H."/>
            <person name="Sugawara M."/>
            <person name="Takahashi M."/>
            <person name="Kanda K."/>
            <person name="Yokoi T."/>
            <person name="Furuya T."/>
            <person name="Kikkawa E."/>
            <person name="Omura Y."/>
            <person name="Abe K."/>
            <person name="Kamihara K."/>
            <person name="Katsuta N."/>
            <person name="Sato K."/>
            <person name="Tanikawa M."/>
            <person name="Yamazaki M."/>
            <person name="Ninomiya K."/>
            <person name="Ishibashi T."/>
            <person name="Yamashita H."/>
            <person name="Murakawa K."/>
            <person name="Fujimori K."/>
            <person name="Tanai H."/>
            <person name="Kimata M."/>
            <person name="Watanabe M."/>
            <person name="Hiraoka S."/>
            <person name="Chiba Y."/>
            <person name="Ishida S."/>
            <person name="Ono Y."/>
            <person name="Takiguchi S."/>
            <person name="Watanabe S."/>
            <person name="Yosida M."/>
            <person name="Hotuta T."/>
            <person name="Kusano J."/>
            <person name="Kanehori K."/>
            <person name="Takahashi-Fujii A."/>
            <person name="Hara H."/>
            <person name="Tanase T.-O."/>
            <person name="Nomura Y."/>
            <person name="Togiya S."/>
            <person name="Komai F."/>
            <person name="Hara R."/>
            <person name="Takeuchi K."/>
            <person name="Arita M."/>
            <person name="Imose N."/>
            <person name="Musashino K."/>
            <person name="Yuuki H."/>
            <person name="Oshima A."/>
            <person name="Sasaki N."/>
            <person name="Aotsuka S."/>
            <person name="Yoshikawa Y."/>
            <person name="Matsunawa H."/>
            <person name="Ichihara T."/>
            <person name="Shiohata N."/>
            <person name="Sano S."/>
            <person name="Moriya S."/>
            <person name="Momiyama H."/>
            <person name="Satoh N."/>
            <person name="Takami S."/>
            <person name="Terashima Y."/>
            <person name="Suzuki O."/>
            <person name="Nakagawa S."/>
            <person name="Senoh A."/>
            <person name="Mizoguchi H."/>
            <person name="Goto Y."/>
            <person name="Shimizu F."/>
            <person name="Wakebe H."/>
            <person name="Hishigaki H."/>
            <person name="Watanabe T."/>
            <person name="Sugiyama A."/>
            <person name="Takemoto M."/>
            <person name="Kawakami B."/>
            <person name="Yamazaki M."/>
            <person name="Watanabe K."/>
            <person name="Kumagai A."/>
            <person name="Itakura S."/>
            <person name="Fukuzumi Y."/>
            <person name="Fujimori Y."/>
            <person name="Komiyama M."/>
            <person name="Tashiro H."/>
            <person name="Tanigami A."/>
            <person name="Fujiwara T."/>
            <person name="Ono T."/>
            <person name="Yamada K."/>
            <person name="Fujii Y."/>
            <person name="Ozaki K."/>
            <person name="Hirao M."/>
            <person name="Ohmori Y."/>
            <person name="Kawabata A."/>
            <person name="Hikiji T."/>
            <person name="Kobatake N."/>
            <person name="Inagaki H."/>
            <person name="Ikema Y."/>
            <person name="Okamoto S."/>
            <person name="Okitani R."/>
            <person name="Kawakami T."/>
            <person name="Noguchi S."/>
            <person name="Itoh T."/>
            <person name="Shigeta K."/>
            <person name="Senba T."/>
            <person name="Matsumura K."/>
            <person name="Nakajima Y."/>
            <person name="Mizuno T."/>
            <person name="Morinaga M."/>
            <person name="Sasaki M."/>
            <person name="Togashi T."/>
            <person name="Oyama M."/>
            <person name="Hata H."/>
            <person name="Watanabe M."/>
            <person name="Komatsu T."/>
            <person name="Mizushima-Sugano J."/>
            <person name="Satoh T."/>
            <person name="Shirai Y."/>
            <person name="Takahashi Y."/>
            <person name="Nakagawa K."/>
            <person name="Okumura K."/>
            <person name="Nagase T."/>
            <person name="Nomura N."/>
            <person name="Kikuchi H."/>
            <person name="Masuho Y."/>
            <person name="Yamashita R."/>
            <person name="Nakai K."/>
            <person name="Yada T."/>
            <person name="Nakamura Y."/>
            <person name="Ohara O."/>
            <person name="Isogai T."/>
            <person name="Sugano S."/>
        </authorList>
    </citation>
    <scope>NUCLEOTIDE SEQUENCE [LARGE SCALE MRNA]</scope>
    <source>
        <tissue>Placenta</tissue>
    </source>
</reference>
<reference key="2">
    <citation type="journal article" date="2003" name="Nature">
        <title>The DNA sequence and analysis of human chromosome 6.</title>
        <authorList>
            <person name="Mungall A.J."/>
            <person name="Palmer S.A."/>
            <person name="Sims S.K."/>
            <person name="Edwards C.A."/>
            <person name="Ashurst J.L."/>
            <person name="Wilming L."/>
            <person name="Jones M.C."/>
            <person name="Horton R."/>
            <person name="Hunt S.E."/>
            <person name="Scott C.E."/>
            <person name="Gilbert J.G.R."/>
            <person name="Clamp M.E."/>
            <person name="Bethel G."/>
            <person name="Milne S."/>
            <person name="Ainscough R."/>
            <person name="Almeida J.P."/>
            <person name="Ambrose K.D."/>
            <person name="Andrews T.D."/>
            <person name="Ashwell R.I.S."/>
            <person name="Babbage A.K."/>
            <person name="Bagguley C.L."/>
            <person name="Bailey J."/>
            <person name="Banerjee R."/>
            <person name="Barker D.J."/>
            <person name="Barlow K.F."/>
            <person name="Bates K."/>
            <person name="Beare D.M."/>
            <person name="Beasley H."/>
            <person name="Beasley O."/>
            <person name="Bird C.P."/>
            <person name="Blakey S.E."/>
            <person name="Bray-Allen S."/>
            <person name="Brook J."/>
            <person name="Brown A.J."/>
            <person name="Brown J.Y."/>
            <person name="Burford D.C."/>
            <person name="Burrill W."/>
            <person name="Burton J."/>
            <person name="Carder C."/>
            <person name="Carter N.P."/>
            <person name="Chapman J.C."/>
            <person name="Clark S.Y."/>
            <person name="Clark G."/>
            <person name="Clee C.M."/>
            <person name="Clegg S."/>
            <person name="Cobley V."/>
            <person name="Collier R.E."/>
            <person name="Collins J.E."/>
            <person name="Colman L.K."/>
            <person name="Corby N.R."/>
            <person name="Coville G.J."/>
            <person name="Culley K.M."/>
            <person name="Dhami P."/>
            <person name="Davies J."/>
            <person name="Dunn M."/>
            <person name="Earthrowl M.E."/>
            <person name="Ellington A.E."/>
            <person name="Evans K.A."/>
            <person name="Faulkner L."/>
            <person name="Francis M.D."/>
            <person name="Frankish A."/>
            <person name="Frankland J."/>
            <person name="French L."/>
            <person name="Garner P."/>
            <person name="Garnett J."/>
            <person name="Ghori M.J."/>
            <person name="Gilby L.M."/>
            <person name="Gillson C.J."/>
            <person name="Glithero R.J."/>
            <person name="Grafham D.V."/>
            <person name="Grant M."/>
            <person name="Gribble S."/>
            <person name="Griffiths C."/>
            <person name="Griffiths M.N.D."/>
            <person name="Hall R."/>
            <person name="Halls K.S."/>
            <person name="Hammond S."/>
            <person name="Harley J.L."/>
            <person name="Hart E.A."/>
            <person name="Heath P.D."/>
            <person name="Heathcott R."/>
            <person name="Holmes S.J."/>
            <person name="Howden P.J."/>
            <person name="Howe K.L."/>
            <person name="Howell G.R."/>
            <person name="Huckle E."/>
            <person name="Humphray S.J."/>
            <person name="Humphries M.D."/>
            <person name="Hunt A.R."/>
            <person name="Johnson C.M."/>
            <person name="Joy A.A."/>
            <person name="Kay M."/>
            <person name="Keenan S.J."/>
            <person name="Kimberley A.M."/>
            <person name="King A."/>
            <person name="Laird G.K."/>
            <person name="Langford C."/>
            <person name="Lawlor S."/>
            <person name="Leongamornlert D.A."/>
            <person name="Leversha M."/>
            <person name="Lloyd C.R."/>
            <person name="Lloyd D.M."/>
            <person name="Loveland J.E."/>
            <person name="Lovell J."/>
            <person name="Martin S."/>
            <person name="Mashreghi-Mohammadi M."/>
            <person name="Maslen G.L."/>
            <person name="Matthews L."/>
            <person name="McCann O.T."/>
            <person name="McLaren S.J."/>
            <person name="McLay K."/>
            <person name="McMurray A."/>
            <person name="Moore M.J.F."/>
            <person name="Mullikin J.C."/>
            <person name="Niblett D."/>
            <person name="Nickerson T."/>
            <person name="Novik K.L."/>
            <person name="Oliver K."/>
            <person name="Overton-Larty E.K."/>
            <person name="Parker A."/>
            <person name="Patel R."/>
            <person name="Pearce A.V."/>
            <person name="Peck A.I."/>
            <person name="Phillimore B.J.C.T."/>
            <person name="Phillips S."/>
            <person name="Plumb R.W."/>
            <person name="Porter K.M."/>
            <person name="Ramsey Y."/>
            <person name="Ranby S.A."/>
            <person name="Rice C.M."/>
            <person name="Ross M.T."/>
            <person name="Searle S.M."/>
            <person name="Sehra H.K."/>
            <person name="Sheridan E."/>
            <person name="Skuce C.D."/>
            <person name="Smith S."/>
            <person name="Smith M."/>
            <person name="Spraggon L."/>
            <person name="Squares S.L."/>
            <person name="Steward C.A."/>
            <person name="Sycamore N."/>
            <person name="Tamlyn-Hall G."/>
            <person name="Tester J."/>
            <person name="Theaker A.J."/>
            <person name="Thomas D.W."/>
            <person name="Thorpe A."/>
            <person name="Tracey A."/>
            <person name="Tromans A."/>
            <person name="Tubby B."/>
            <person name="Wall M."/>
            <person name="Wallis J.M."/>
            <person name="West A.P."/>
            <person name="White S.S."/>
            <person name="Whitehead S.L."/>
            <person name="Whittaker H."/>
            <person name="Wild A."/>
            <person name="Willey D.J."/>
            <person name="Wilmer T.E."/>
            <person name="Wood J.M."/>
            <person name="Wray P.W."/>
            <person name="Wyatt J.C."/>
            <person name="Young L."/>
            <person name="Younger R.M."/>
            <person name="Bentley D.R."/>
            <person name="Coulson A."/>
            <person name="Durbin R.M."/>
            <person name="Hubbard T."/>
            <person name="Sulston J.E."/>
            <person name="Dunham I."/>
            <person name="Rogers J."/>
            <person name="Beck S."/>
        </authorList>
    </citation>
    <scope>NUCLEOTIDE SEQUENCE [LARGE SCALE GENOMIC DNA]</scope>
</reference>
<reference key="3">
    <citation type="submission" date="2005-09" db="EMBL/GenBank/DDBJ databases">
        <authorList>
            <person name="Mural R.J."/>
            <person name="Istrail S."/>
            <person name="Sutton G.G."/>
            <person name="Florea L."/>
            <person name="Halpern A.L."/>
            <person name="Mobarry C.M."/>
            <person name="Lippert R."/>
            <person name="Walenz B."/>
            <person name="Shatkay H."/>
            <person name="Dew I."/>
            <person name="Miller J.R."/>
            <person name="Flanigan M.J."/>
            <person name="Edwards N.J."/>
            <person name="Bolanos R."/>
            <person name="Fasulo D."/>
            <person name="Halldorsson B.V."/>
            <person name="Hannenhalli S."/>
            <person name="Turner R."/>
            <person name="Yooseph S."/>
            <person name="Lu F."/>
            <person name="Nusskern D.R."/>
            <person name="Shue B.C."/>
            <person name="Zheng X.H."/>
            <person name="Zhong F."/>
            <person name="Delcher A.L."/>
            <person name="Huson D.H."/>
            <person name="Kravitz S.A."/>
            <person name="Mouchard L."/>
            <person name="Reinert K."/>
            <person name="Remington K.A."/>
            <person name="Clark A.G."/>
            <person name="Waterman M.S."/>
            <person name="Eichler E.E."/>
            <person name="Adams M.D."/>
            <person name="Hunkapiller M.W."/>
            <person name="Myers E.W."/>
            <person name="Venter J.C."/>
        </authorList>
    </citation>
    <scope>NUCLEOTIDE SEQUENCE [LARGE SCALE GENOMIC DNA]</scope>
</reference>
<reference key="4">
    <citation type="journal article" date="2020" name="Cell Discov.">
        <title>Cryo-EM structures of human calcium homeostasis modulator 5.</title>
        <authorList>
            <person name="Liu J."/>
            <person name="Wan F."/>
            <person name="Jin Q."/>
            <person name="Li X."/>
            <person name="Bhat E.A."/>
            <person name="Guo J."/>
            <person name="Lei M."/>
            <person name="Guan F."/>
            <person name="Wu J."/>
            <person name="Ye S."/>
        </authorList>
    </citation>
    <scope>STRUCTURE BY ELECTRON MICROSCOPY (2.61 ANGSTROMS) OF 1-288</scope>
    <scope>DISULFIDE BOND</scope>
    <scope>TOPOLOGY</scope>
    <scope>SUBUNIT</scope>
    <scope>FUNCTION</scope>
</reference>
<comment type="function">
    <text evidence="2">May assemble to form large pore channels with gating and ion conductance likely regulated by membrane lipids.</text>
</comment>
<comment type="subunit">
    <text evidence="2">Oligomerizes to form undecameric cone-shaped channels.</text>
</comment>
<comment type="interaction">
    <interactant intactId="EBI-21879592">
        <id>Q8N5C1</id>
    </interactant>
    <interactant intactId="EBI-295663">
        <id>Q00534</id>
        <label>CDK6</label>
    </interactant>
    <organismsDiffer>false</organismsDiffer>
    <experiments>2</experiments>
</comment>
<comment type="subcellular location">
    <subcellularLocation>
        <location evidence="3">Membrane</location>
        <topology evidence="1">Multi-pass membrane protein</topology>
    </subcellularLocation>
</comment>
<comment type="similarity">
    <text evidence="3">Belongs to the CALHM family.</text>
</comment>
<gene>
    <name evidence="4" type="primary">CALHM5</name>
    <name type="synonym">C6orf188</name>
    <name type="synonym">FAM26E</name>
</gene>
<name>CAHM5_HUMAN</name>